<sequence>MSGNTGERPFADIITSIRYWVIHSITIPSLFIAGWLFVSTGLAYDVFGSPRPNEYFTESRQEIPLITGRFNSLEQVDEFTRSF</sequence>
<geneLocation type="chloroplast"/>
<evidence type="ECO:0000255" key="1">
    <source>
        <dbReference type="HAMAP-Rule" id="MF_00642"/>
    </source>
</evidence>
<organism>
    <name type="scientific">Psilotum nudum</name>
    <name type="common">Whisk fern</name>
    <name type="synonym">Lycopodium nudum</name>
    <dbReference type="NCBI Taxonomy" id="3240"/>
    <lineage>
        <taxon>Eukaryota</taxon>
        <taxon>Viridiplantae</taxon>
        <taxon>Streptophyta</taxon>
        <taxon>Embryophyta</taxon>
        <taxon>Tracheophyta</taxon>
        <taxon>Polypodiopsida</taxon>
        <taxon>Ophioglossidae</taxon>
        <taxon>Psilotales</taxon>
        <taxon>Psilotaceae</taxon>
        <taxon>Psilotum</taxon>
    </lineage>
</organism>
<dbReference type="EMBL" id="AP004638">
    <property type="protein sequence ID" value="BAB84233.1"/>
    <property type="molecule type" value="Genomic_DNA"/>
</dbReference>
<dbReference type="RefSeq" id="NP_569646.1">
    <property type="nucleotide sequence ID" value="NC_003386.1"/>
</dbReference>
<dbReference type="SMR" id="Q8WI04"/>
<dbReference type="GeneID" id="2545142"/>
<dbReference type="GO" id="GO:0009535">
    <property type="term" value="C:chloroplast thylakoid membrane"/>
    <property type="evidence" value="ECO:0007669"/>
    <property type="project" value="UniProtKB-SubCell"/>
</dbReference>
<dbReference type="GO" id="GO:0009539">
    <property type="term" value="C:photosystem II reaction center"/>
    <property type="evidence" value="ECO:0007669"/>
    <property type="project" value="InterPro"/>
</dbReference>
<dbReference type="GO" id="GO:0009055">
    <property type="term" value="F:electron transfer activity"/>
    <property type="evidence" value="ECO:0007669"/>
    <property type="project" value="UniProtKB-UniRule"/>
</dbReference>
<dbReference type="GO" id="GO:0020037">
    <property type="term" value="F:heme binding"/>
    <property type="evidence" value="ECO:0007669"/>
    <property type="project" value="InterPro"/>
</dbReference>
<dbReference type="GO" id="GO:0005506">
    <property type="term" value="F:iron ion binding"/>
    <property type="evidence" value="ECO:0007669"/>
    <property type="project" value="UniProtKB-UniRule"/>
</dbReference>
<dbReference type="GO" id="GO:0009767">
    <property type="term" value="P:photosynthetic electron transport chain"/>
    <property type="evidence" value="ECO:0007669"/>
    <property type="project" value="InterPro"/>
</dbReference>
<dbReference type="Gene3D" id="1.20.5.860">
    <property type="entry name" value="Photosystem II cytochrome b559, alpha subunit"/>
    <property type="match status" value="1"/>
</dbReference>
<dbReference type="HAMAP" id="MF_00642">
    <property type="entry name" value="PSII_PsbE"/>
    <property type="match status" value="1"/>
</dbReference>
<dbReference type="InterPro" id="IPR006217">
    <property type="entry name" value="PSII_cyt_b559_asu"/>
</dbReference>
<dbReference type="InterPro" id="IPR037025">
    <property type="entry name" value="PSII_cyt_b559_asu_sf"/>
</dbReference>
<dbReference type="InterPro" id="IPR006216">
    <property type="entry name" value="PSII_cyt_b559_CS"/>
</dbReference>
<dbReference type="InterPro" id="IPR013081">
    <property type="entry name" value="PSII_cyt_b559_N"/>
</dbReference>
<dbReference type="InterPro" id="IPR013082">
    <property type="entry name" value="PSII_cytb559_asu_lum"/>
</dbReference>
<dbReference type="NCBIfam" id="TIGR01332">
    <property type="entry name" value="cyt_b559_alpha"/>
    <property type="match status" value="1"/>
</dbReference>
<dbReference type="PANTHER" id="PTHR33391">
    <property type="entry name" value="CYTOCHROME B559 SUBUNIT BETA-RELATED"/>
    <property type="match status" value="1"/>
</dbReference>
<dbReference type="PANTHER" id="PTHR33391:SF9">
    <property type="entry name" value="CYTOCHROME B559 SUBUNIT BETA-RELATED"/>
    <property type="match status" value="1"/>
</dbReference>
<dbReference type="Pfam" id="PF00283">
    <property type="entry name" value="Cytochrom_B559"/>
    <property type="match status" value="1"/>
</dbReference>
<dbReference type="Pfam" id="PF00284">
    <property type="entry name" value="Cytochrom_B559a"/>
    <property type="match status" value="1"/>
</dbReference>
<dbReference type="PIRSF" id="PIRSF000036">
    <property type="entry name" value="PsbE"/>
    <property type="match status" value="1"/>
</dbReference>
<dbReference type="SUPFAM" id="SSF161045">
    <property type="entry name" value="Cytochrome b559 subunits"/>
    <property type="match status" value="1"/>
</dbReference>
<dbReference type="PROSITE" id="PS00537">
    <property type="entry name" value="CYTOCHROME_B559"/>
    <property type="match status" value="1"/>
</dbReference>
<accession>Q8WI04</accession>
<proteinExistence type="inferred from homology"/>
<protein>
    <recommendedName>
        <fullName evidence="1">Cytochrome b559 subunit alpha</fullName>
    </recommendedName>
    <alternativeName>
        <fullName evidence="1">PSII reaction center subunit V</fullName>
    </alternativeName>
</protein>
<reference key="1">
    <citation type="journal article" date="2004" name="Mol. Biol. Evol.">
        <title>Chloroplast phylogeny indicates that bryophytes are monophyletic.</title>
        <authorList>
            <person name="Nishiyama T."/>
            <person name="Wolf P.G."/>
            <person name="Kugita M."/>
            <person name="Sinclair R.B."/>
            <person name="Sugita M."/>
            <person name="Sugiura C."/>
            <person name="Wakasugi T."/>
            <person name="Yamada K."/>
            <person name="Yoshinaga K."/>
            <person name="Yamaguchi K."/>
            <person name="Ueda K."/>
            <person name="Hasebe M."/>
        </authorList>
    </citation>
    <scope>NUCLEOTIDE SEQUENCE [LARGE SCALE GENOMIC DNA]</scope>
    <source>
        <strain>Kingyoku</strain>
    </source>
</reference>
<feature type="chain" id="PRO_0000200335" description="Cytochrome b559 subunit alpha">
    <location>
        <begin position="1"/>
        <end position="83"/>
    </location>
</feature>
<feature type="transmembrane region" description="Helical" evidence="1">
    <location>
        <begin position="21"/>
        <end position="35"/>
    </location>
</feature>
<feature type="binding site" description="axial binding residue" evidence="1">
    <location>
        <position position="23"/>
    </location>
    <ligand>
        <name>heme</name>
        <dbReference type="ChEBI" id="CHEBI:30413"/>
        <note>ligand shared with beta subunit</note>
    </ligand>
    <ligandPart>
        <name>Fe</name>
        <dbReference type="ChEBI" id="CHEBI:18248"/>
    </ligandPart>
</feature>
<gene>
    <name evidence="1" type="primary">psbE</name>
</gene>
<comment type="function">
    <text evidence="1">This b-type cytochrome is tightly associated with the reaction center of photosystem II (PSII). PSII is a light-driven water:plastoquinone oxidoreductase that uses light energy to abstract electrons from H(2)O, generating O(2) and a proton gradient subsequently used for ATP formation. It consists of a core antenna complex that captures photons, and an electron transfer chain that converts photonic excitation into a charge separation.</text>
</comment>
<comment type="cofactor">
    <cofactor evidence="1">
        <name>heme b</name>
        <dbReference type="ChEBI" id="CHEBI:60344"/>
    </cofactor>
    <text evidence="1">With its partner (PsbF) binds heme. PSII binds additional chlorophylls, carotenoids and specific lipids.</text>
</comment>
<comment type="subunit">
    <text evidence="1">Heterodimer of an alpha subunit and a beta subunit. PSII is composed of 1 copy each of membrane proteins PsbA, PsbB, PsbC, PsbD, PsbE, PsbF, PsbH, PsbI, PsbJ, PsbK, PsbL, PsbM, PsbT, PsbX, PsbY, PsbZ, Psb30/Ycf12, at least 3 peripheral proteins of the oxygen-evolving complex and a large number of cofactors. It forms dimeric complexes.</text>
</comment>
<comment type="subcellular location">
    <subcellularLocation>
        <location evidence="1">Plastid</location>
        <location evidence="1">Chloroplast thylakoid membrane</location>
        <topology evidence="1">Single-pass membrane protein</topology>
    </subcellularLocation>
</comment>
<comment type="similarity">
    <text evidence="1">Belongs to the PsbE/PsbF family.</text>
</comment>
<name>PSBE_PSINU</name>
<keyword id="KW-0150">Chloroplast</keyword>
<keyword id="KW-0249">Electron transport</keyword>
<keyword id="KW-0349">Heme</keyword>
<keyword id="KW-0408">Iron</keyword>
<keyword id="KW-0472">Membrane</keyword>
<keyword id="KW-0479">Metal-binding</keyword>
<keyword id="KW-0602">Photosynthesis</keyword>
<keyword id="KW-0604">Photosystem II</keyword>
<keyword id="KW-0934">Plastid</keyword>
<keyword id="KW-0793">Thylakoid</keyword>
<keyword id="KW-0812">Transmembrane</keyword>
<keyword id="KW-1133">Transmembrane helix</keyword>
<keyword id="KW-0813">Transport</keyword>